<comment type="function">
    <text evidence="1">Located at the top of the head of the 30S subunit, it contacts several helices of the 16S rRNA. In the 70S ribosome it contacts the 23S rRNA (bridge B1a) and protein L5 of the 50S subunit (bridge B1b), connecting the 2 subunits; these bridges are implicated in subunit movement. Contacts the tRNAs in the A and P-sites.</text>
</comment>
<comment type="subunit">
    <text evidence="1">Part of the 30S ribosomal subunit. Forms a loose heterodimer with protein S19. Forms two bridges to the 50S subunit in the 70S ribosome.</text>
</comment>
<comment type="similarity">
    <text evidence="1">Belongs to the universal ribosomal protein uS13 family.</text>
</comment>
<name>RS13_PSYA2</name>
<keyword id="KW-1185">Reference proteome</keyword>
<keyword id="KW-0687">Ribonucleoprotein</keyword>
<keyword id="KW-0689">Ribosomal protein</keyword>
<keyword id="KW-0694">RNA-binding</keyword>
<keyword id="KW-0699">rRNA-binding</keyword>
<keyword id="KW-0820">tRNA-binding</keyword>
<gene>
    <name evidence="1" type="primary">rpsM</name>
    <name type="ordered locus">Psyc_0511</name>
</gene>
<proteinExistence type="inferred from homology"/>
<feature type="chain" id="PRO_0000230555" description="Small ribosomal subunit protein uS13">
    <location>
        <begin position="1"/>
        <end position="118"/>
    </location>
</feature>
<feature type="region of interest" description="Disordered" evidence="2">
    <location>
        <begin position="92"/>
        <end position="118"/>
    </location>
</feature>
<feature type="compositionally biased region" description="Basic residues" evidence="2">
    <location>
        <begin position="106"/>
        <end position="118"/>
    </location>
</feature>
<accession>Q4FUD4</accession>
<dbReference type="EMBL" id="CP000082">
    <property type="protein sequence ID" value="AAZ18374.1"/>
    <property type="molecule type" value="Genomic_DNA"/>
</dbReference>
<dbReference type="RefSeq" id="WP_011279806.1">
    <property type="nucleotide sequence ID" value="NC_007204.1"/>
</dbReference>
<dbReference type="SMR" id="Q4FUD4"/>
<dbReference type="STRING" id="259536.Psyc_0511"/>
<dbReference type="KEGG" id="par:Psyc_0511"/>
<dbReference type="eggNOG" id="COG0099">
    <property type="taxonomic scope" value="Bacteria"/>
</dbReference>
<dbReference type="HOGENOM" id="CLU_103849_1_2_6"/>
<dbReference type="OrthoDB" id="9803610at2"/>
<dbReference type="Proteomes" id="UP000000546">
    <property type="component" value="Chromosome"/>
</dbReference>
<dbReference type="GO" id="GO:0005829">
    <property type="term" value="C:cytosol"/>
    <property type="evidence" value="ECO:0007669"/>
    <property type="project" value="TreeGrafter"/>
</dbReference>
<dbReference type="GO" id="GO:0015935">
    <property type="term" value="C:small ribosomal subunit"/>
    <property type="evidence" value="ECO:0007669"/>
    <property type="project" value="TreeGrafter"/>
</dbReference>
<dbReference type="GO" id="GO:0019843">
    <property type="term" value="F:rRNA binding"/>
    <property type="evidence" value="ECO:0007669"/>
    <property type="project" value="UniProtKB-UniRule"/>
</dbReference>
<dbReference type="GO" id="GO:0003735">
    <property type="term" value="F:structural constituent of ribosome"/>
    <property type="evidence" value="ECO:0007669"/>
    <property type="project" value="InterPro"/>
</dbReference>
<dbReference type="GO" id="GO:0000049">
    <property type="term" value="F:tRNA binding"/>
    <property type="evidence" value="ECO:0007669"/>
    <property type="project" value="UniProtKB-UniRule"/>
</dbReference>
<dbReference type="GO" id="GO:0006412">
    <property type="term" value="P:translation"/>
    <property type="evidence" value="ECO:0007669"/>
    <property type="project" value="UniProtKB-UniRule"/>
</dbReference>
<dbReference type="FunFam" id="1.10.8.50:FF:000001">
    <property type="entry name" value="30S ribosomal protein S13"/>
    <property type="match status" value="1"/>
</dbReference>
<dbReference type="FunFam" id="4.10.910.10:FF:000001">
    <property type="entry name" value="30S ribosomal protein S13"/>
    <property type="match status" value="1"/>
</dbReference>
<dbReference type="Gene3D" id="1.10.8.50">
    <property type="match status" value="1"/>
</dbReference>
<dbReference type="Gene3D" id="4.10.910.10">
    <property type="entry name" value="30s ribosomal protein s13, domain 2"/>
    <property type="match status" value="1"/>
</dbReference>
<dbReference type="HAMAP" id="MF_01315">
    <property type="entry name" value="Ribosomal_uS13"/>
    <property type="match status" value="1"/>
</dbReference>
<dbReference type="InterPro" id="IPR027437">
    <property type="entry name" value="Rbsml_uS13_C"/>
</dbReference>
<dbReference type="InterPro" id="IPR001892">
    <property type="entry name" value="Ribosomal_uS13"/>
</dbReference>
<dbReference type="InterPro" id="IPR010979">
    <property type="entry name" value="Ribosomal_uS13-like_H2TH"/>
</dbReference>
<dbReference type="InterPro" id="IPR019980">
    <property type="entry name" value="Ribosomal_uS13_bac-type"/>
</dbReference>
<dbReference type="InterPro" id="IPR018269">
    <property type="entry name" value="Ribosomal_uS13_CS"/>
</dbReference>
<dbReference type="NCBIfam" id="TIGR03631">
    <property type="entry name" value="uS13_bact"/>
    <property type="match status" value="1"/>
</dbReference>
<dbReference type="PANTHER" id="PTHR10871">
    <property type="entry name" value="30S RIBOSOMAL PROTEIN S13/40S RIBOSOMAL PROTEIN S18"/>
    <property type="match status" value="1"/>
</dbReference>
<dbReference type="PANTHER" id="PTHR10871:SF1">
    <property type="entry name" value="SMALL RIBOSOMAL SUBUNIT PROTEIN US13M"/>
    <property type="match status" value="1"/>
</dbReference>
<dbReference type="Pfam" id="PF00416">
    <property type="entry name" value="Ribosomal_S13"/>
    <property type="match status" value="1"/>
</dbReference>
<dbReference type="PIRSF" id="PIRSF002134">
    <property type="entry name" value="Ribosomal_S13"/>
    <property type="match status" value="1"/>
</dbReference>
<dbReference type="SUPFAM" id="SSF46946">
    <property type="entry name" value="S13-like H2TH domain"/>
    <property type="match status" value="1"/>
</dbReference>
<dbReference type="PROSITE" id="PS00646">
    <property type="entry name" value="RIBOSOMAL_S13_1"/>
    <property type="match status" value="1"/>
</dbReference>
<dbReference type="PROSITE" id="PS50159">
    <property type="entry name" value="RIBOSOMAL_S13_2"/>
    <property type="match status" value="1"/>
</dbReference>
<evidence type="ECO:0000255" key="1">
    <source>
        <dbReference type="HAMAP-Rule" id="MF_01315"/>
    </source>
</evidence>
<evidence type="ECO:0000256" key="2">
    <source>
        <dbReference type="SAM" id="MobiDB-lite"/>
    </source>
</evidence>
<evidence type="ECO:0000305" key="3"/>
<protein>
    <recommendedName>
        <fullName evidence="1">Small ribosomal subunit protein uS13</fullName>
    </recommendedName>
    <alternativeName>
        <fullName evidence="3">30S ribosomal protein S13</fullName>
    </alternativeName>
</protein>
<organism>
    <name type="scientific">Psychrobacter arcticus (strain DSM 17307 / VKM B-2377 / 273-4)</name>
    <dbReference type="NCBI Taxonomy" id="259536"/>
    <lineage>
        <taxon>Bacteria</taxon>
        <taxon>Pseudomonadati</taxon>
        <taxon>Pseudomonadota</taxon>
        <taxon>Gammaproteobacteria</taxon>
        <taxon>Moraxellales</taxon>
        <taxon>Moraxellaceae</taxon>
        <taxon>Psychrobacter</taxon>
    </lineage>
</organism>
<sequence length="118" mass="13225">MARIAGVNIPDNKHAVISLTYIFGVGRTTAQKILEAVGIAPSTKVSQLDDTQLDAIRAQVSEYMTEGDLRREVSMNIKRLVDLGCYRGIRHRRNLPVRGQNTKNNARTRKGPTRPLKR</sequence>
<reference key="1">
    <citation type="journal article" date="2010" name="Appl. Environ. Microbiol.">
        <title>The genome sequence of Psychrobacter arcticus 273-4, a psychroactive Siberian permafrost bacterium, reveals mechanisms for adaptation to low-temperature growth.</title>
        <authorList>
            <person name="Ayala-del-Rio H.L."/>
            <person name="Chain P.S."/>
            <person name="Grzymski J.J."/>
            <person name="Ponder M.A."/>
            <person name="Ivanova N."/>
            <person name="Bergholz P.W."/>
            <person name="Di Bartolo G."/>
            <person name="Hauser L."/>
            <person name="Land M."/>
            <person name="Bakermans C."/>
            <person name="Rodrigues D."/>
            <person name="Klappenbach J."/>
            <person name="Zarka D."/>
            <person name="Larimer F."/>
            <person name="Richardson P."/>
            <person name="Murray A."/>
            <person name="Thomashow M."/>
            <person name="Tiedje J.M."/>
        </authorList>
    </citation>
    <scope>NUCLEOTIDE SEQUENCE [LARGE SCALE GENOMIC DNA]</scope>
    <source>
        <strain>DSM 17307 / VKM B-2377 / 273-4</strain>
    </source>
</reference>